<protein>
    <recommendedName>
        <fullName>Serine proteinase inhibitor 1</fullName>
        <shortName>Serp-1</shortName>
        <shortName>Serpin-1</shortName>
    </recommendedName>
</protein>
<sequence>MKYLVLVLCLTSCACRDIGLWTFRYVYNESDNVVFSPYGLTSALSVLRIAAGGNTKREIDVPESVVEDSDAFLALRELFVDASVPLRPEFTAEFSSRFNTSVQRVTFNSENVKDVINSYVKDKTGGDVPRVLDASLDRDTKMLLLSSVRMKTSWRHVFDPSFTTDQPFYSGNVTYKVRMMNKIDTLKTETFTLRNVGYSVTELPYKRRQTAMLLVVPDDLGEIVRALDLSLVRFWIRNMRKDVCQVVMPKFSVESVLDLRDALQRLGVRDAFDPSRADFGQASPSNDLYVTKVLQTSKIEADERGTTASSDTAITLIPRNALTAIVANKPFMFLIYHKPTTTVLFMGTITKGEKVIYDTEGRDDVVSSV</sequence>
<keyword id="KW-0002">3D-structure</keyword>
<keyword id="KW-0646">Protease inhibitor</keyword>
<keyword id="KW-1185">Reference proteome</keyword>
<keyword id="KW-0722">Serine protease inhibitor</keyword>
<keyword id="KW-0843">Virulence</keyword>
<organismHost>
    <name type="scientific">Oryctolagus cuniculus</name>
    <name type="common">Rabbit</name>
    <dbReference type="NCBI Taxonomy" id="9986"/>
</organismHost>
<gene>
    <name type="primary">SPI-1</name>
    <name type="synonym">SERP1</name>
    <name type="ordered locus">m008.1L</name>
</gene>
<evidence type="ECO:0000250" key="1"/>
<evidence type="ECO:0000305" key="2"/>
<evidence type="ECO:0007829" key="3">
    <source>
        <dbReference type="PDB" id="6BJ5"/>
    </source>
</evidence>
<feature type="chain" id="PRO_0000094139" description="Serine proteinase inhibitor 1">
    <location>
        <begin position="1"/>
        <end position="369"/>
    </location>
</feature>
<feature type="site" description="Reactive bond" evidence="1">
    <location>
        <begin position="319"/>
        <end position="320"/>
    </location>
</feature>
<feature type="sequence conflict" description="In Ref. 2 and 3." evidence="2" ref="2 3">
    <original>MKYLVLVLCLTSCACR</original>
    <variation>MFNVVRV</variation>
    <location>
        <begin position="1"/>
        <end position="16"/>
    </location>
</feature>
<feature type="helix" evidence="3">
    <location>
        <begin position="18"/>
        <end position="21"/>
    </location>
</feature>
<feature type="helix" evidence="3">
    <location>
        <begin position="23"/>
        <end position="26"/>
    </location>
</feature>
<feature type="strand" evidence="3">
    <location>
        <begin position="33"/>
        <end position="35"/>
    </location>
</feature>
<feature type="helix" evidence="3">
    <location>
        <begin position="37"/>
        <end position="49"/>
    </location>
</feature>
<feature type="helix" evidence="3">
    <location>
        <begin position="53"/>
        <end position="58"/>
    </location>
</feature>
<feature type="turn" evidence="3">
    <location>
        <begin position="69"/>
        <end position="71"/>
    </location>
</feature>
<feature type="strand" evidence="3">
    <location>
        <begin position="73"/>
        <end position="81"/>
    </location>
</feature>
<feature type="helix" evidence="3">
    <location>
        <begin position="88"/>
        <end position="98"/>
    </location>
</feature>
<feature type="strand" evidence="3">
    <location>
        <begin position="103"/>
        <end position="105"/>
    </location>
</feature>
<feature type="strand" evidence="3">
    <location>
        <begin position="107"/>
        <end position="111"/>
    </location>
</feature>
<feature type="helix" evidence="3">
    <location>
        <begin position="112"/>
        <end position="120"/>
    </location>
</feature>
<feature type="turn" evidence="3">
    <location>
        <begin position="131"/>
        <end position="135"/>
    </location>
</feature>
<feature type="strand" evidence="3">
    <location>
        <begin position="142"/>
        <end position="156"/>
    </location>
</feature>
<feature type="helix" evidence="3">
    <location>
        <begin position="160"/>
        <end position="162"/>
    </location>
</feature>
<feature type="strand" evidence="3">
    <location>
        <begin position="164"/>
        <end position="170"/>
    </location>
</feature>
<feature type="strand" evidence="3">
    <location>
        <begin position="173"/>
        <end position="185"/>
    </location>
</feature>
<feature type="strand" evidence="3">
    <location>
        <begin position="188"/>
        <end position="191"/>
    </location>
</feature>
<feature type="strand" evidence="3">
    <location>
        <begin position="198"/>
        <end position="205"/>
    </location>
</feature>
<feature type="strand" evidence="3">
    <location>
        <begin position="208"/>
        <end position="218"/>
    </location>
</feature>
<feature type="helix" evidence="3">
    <location>
        <begin position="220"/>
        <end position="226"/>
    </location>
</feature>
<feature type="helix" evidence="3">
    <location>
        <begin position="229"/>
        <end position="238"/>
    </location>
</feature>
<feature type="strand" evidence="3">
    <location>
        <begin position="243"/>
        <end position="249"/>
    </location>
</feature>
<feature type="strand" evidence="3">
    <location>
        <begin position="251"/>
        <end position="258"/>
    </location>
</feature>
<feature type="helix" evidence="3">
    <location>
        <begin position="260"/>
        <end position="265"/>
    </location>
</feature>
<feature type="helix" evidence="3">
    <location>
        <begin position="270"/>
        <end position="272"/>
    </location>
</feature>
<feature type="turn" evidence="3">
    <location>
        <begin position="274"/>
        <end position="276"/>
    </location>
</feature>
<feature type="turn" evidence="3">
    <location>
        <begin position="280"/>
        <end position="282"/>
    </location>
</feature>
<feature type="strand" evidence="3">
    <location>
        <begin position="293"/>
        <end position="302"/>
    </location>
</feature>
<feature type="strand" evidence="3">
    <location>
        <begin position="305"/>
        <end position="314"/>
    </location>
</feature>
<feature type="strand" evidence="3">
    <location>
        <begin position="323"/>
        <end position="326"/>
    </location>
</feature>
<feature type="strand" evidence="3">
    <location>
        <begin position="331"/>
        <end position="337"/>
    </location>
</feature>
<feature type="turn" evidence="3">
    <location>
        <begin position="338"/>
        <end position="341"/>
    </location>
</feature>
<feature type="strand" evidence="3">
    <location>
        <begin position="342"/>
        <end position="349"/>
    </location>
</feature>
<feature type="strand" evidence="3">
    <location>
        <begin position="353"/>
        <end position="356"/>
    </location>
</feature>
<organism>
    <name type="scientific">Myxoma virus (strain Lausanne)</name>
    <name type="common">MYXV</name>
    <dbReference type="NCBI Taxonomy" id="31530"/>
    <lineage>
        <taxon>Viruses</taxon>
        <taxon>Varidnaviria</taxon>
        <taxon>Bamfordvirae</taxon>
        <taxon>Nucleocytoviricota</taxon>
        <taxon>Pokkesviricetes</taxon>
        <taxon>Chitovirales</taxon>
        <taxon>Poxviridae</taxon>
        <taxon>Chordopoxvirinae</taxon>
        <taxon>Leporipoxvirus</taxon>
        <taxon>Myxoma virus</taxon>
    </lineage>
</organism>
<name>SPI1_MYXVL</name>
<reference key="1">
    <citation type="journal article" date="1990" name="Virology">
        <title>Myxoma virus and malignant rabbit fibroma virus encode a serpin-like protein important for virus virulence.</title>
        <authorList>
            <person name="Upton C."/>
            <person name="Macen J.L."/>
            <person name="Wishart D.S."/>
            <person name="McFadden G."/>
        </authorList>
    </citation>
    <scope>NUCLEOTIDE SEQUENCE [GENOMIC DNA]</scope>
</reference>
<reference key="2">
    <citation type="journal article" date="1986" name="Mol. Cell. Biol.">
        <title>DNA sequence homology between the terminal inverted repeats of Shope fibroma virus and an endogenous cellular plasmid species.</title>
        <authorList>
            <person name="Upton C."/>
            <person name="McFadden G."/>
        </authorList>
    </citation>
    <scope>NUCLEOTIDE SEQUENCE [GENOMIC DNA]</scope>
</reference>
<reference key="3">
    <citation type="journal article" date="1986" name="FEBS Lett.">
        <title>A novel member of the serpin superfamily is encoded on a circular plasmid-like DNA species isolated from rabbit cells.</title>
        <authorList>
            <person name="Upton C."/>
            <person name="Carrell R.W."/>
            <person name="McFadden G."/>
        </authorList>
    </citation>
    <scope>NUCLEOTIDE SEQUENCE [GENOMIC DNA]</scope>
</reference>
<reference key="4">
    <citation type="journal article" date="1999" name="Virology">
        <title>The complete DNA sequence of myxoma virus.</title>
        <authorList>
            <person name="Cameron C."/>
            <person name="Hota-Mitchell S."/>
            <person name="Chen L."/>
            <person name="Barrett J.W."/>
            <person name="Cao J.-X."/>
            <person name="Macaulay C."/>
            <person name="Willer D.O."/>
            <person name="Evans D.H."/>
            <person name="McFadden G."/>
        </authorList>
    </citation>
    <scope>NUCLEOTIDE SEQUENCE [LARGE SCALE GENOMIC DNA]</scope>
</reference>
<reference key="5">
    <citation type="submission" date="2017-11" db="PDB data bank">
        <title>Structure of the Clinically used Myxomaviral Serine Protease Inhibitor 1 (SERP-1).</title>
        <authorList>
            <person name="Mahon B.P."/>
            <person name="Lomelino C.L."/>
            <person name="Ambadapadi S."/>
            <person name="Yaron J."/>
            <person name="Keinan S."/>
            <person name="Kurnikov I."/>
            <person name="Zhang L."/>
            <person name="Reeves W."/>
            <person name="Pinard M.A."/>
            <person name="Macaulay C."/>
            <person name="McFadden G."/>
            <person name="Tibbetts S."/>
            <person name="McKenna R."/>
            <person name="Lucas A."/>
        </authorList>
    </citation>
    <scope>X-RAY CRYSTALLOGRAPHY (2.50 ANGSTROMS) OF 1-369</scope>
</reference>
<accession>P12393</accession>
<comment type="function">
    <text>Important in virulence.</text>
</comment>
<comment type="similarity">
    <text evidence="2">Belongs to the serpin family. Poxviruses subfamily.</text>
</comment>
<comment type="caution">
    <text evidence="2">Was originally (PubMed:3023828, PubMed:3021526) thought to originate from a plasmid rabbit DNA. The original sample was contaminated and the gene is derived from myxoma virus.</text>
</comment>
<proteinExistence type="evidence at protein level"/>
<dbReference type="EMBL" id="M35233">
    <property type="protein sequence ID" value="AAA46629.1"/>
    <property type="molecule type" value="Genomic_DNA"/>
</dbReference>
<dbReference type="EMBL" id="M12333">
    <property type="protein sequence ID" value="AAA81567.1"/>
    <property type="molecule type" value="Genomic_DNA"/>
</dbReference>
<dbReference type="EMBL" id="AF170726">
    <property type="protein sequence ID" value="AAF15055.1"/>
    <property type="molecule type" value="Genomic_DNA"/>
</dbReference>
<dbReference type="EMBL" id="AF170726">
    <property type="protein sequence ID" value="AAF14896.1"/>
    <property type="molecule type" value="Genomic_DNA"/>
</dbReference>
<dbReference type="PIR" id="A24470">
    <property type="entry name" value="A24470"/>
</dbReference>
<dbReference type="PIR" id="B36418">
    <property type="entry name" value="B36418"/>
</dbReference>
<dbReference type="RefSeq" id="NP_051722.1">
    <property type="nucleotide sequence ID" value="NC_001132.2"/>
</dbReference>
<dbReference type="RefSeq" id="NP_051870.1">
    <property type="nucleotide sequence ID" value="NC_001132.2"/>
</dbReference>
<dbReference type="PDB" id="6BJ5">
    <property type="method" value="X-ray"/>
    <property type="resolution" value="2.50 A"/>
    <property type="chains" value="A/B/C=1-315, F/G/H=316-369"/>
</dbReference>
<dbReference type="PDBsum" id="6BJ5"/>
<dbReference type="SMR" id="P12393"/>
<dbReference type="MEROPS" id="I04.046"/>
<dbReference type="GeneID" id="932146"/>
<dbReference type="GeneID" id="932201"/>
<dbReference type="KEGG" id="vg:932146"/>
<dbReference type="KEGG" id="vg:932201"/>
<dbReference type="Proteomes" id="UP000000867">
    <property type="component" value="Segment"/>
</dbReference>
<dbReference type="GO" id="GO:0005615">
    <property type="term" value="C:extracellular space"/>
    <property type="evidence" value="ECO:0007669"/>
    <property type="project" value="InterPro"/>
</dbReference>
<dbReference type="GO" id="GO:0004867">
    <property type="term" value="F:serine-type endopeptidase inhibitor activity"/>
    <property type="evidence" value="ECO:0007669"/>
    <property type="project" value="UniProtKB-KW"/>
</dbReference>
<dbReference type="GO" id="GO:0010757">
    <property type="term" value="P:negative regulation of plasminogen activation"/>
    <property type="evidence" value="ECO:0007669"/>
    <property type="project" value="TreeGrafter"/>
</dbReference>
<dbReference type="GO" id="GO:0061044">
    <property type="term" value="P:negative regulation of vascular wound healing"/>
    <property type="evidence" value="ECO:0007669"/>
    <property type="project" value="TreeGrafter"/>
</dbReference>
<dbReference type="CDD" id="cd19585">
    <property type="entry name" value="serpin_poxvirus"/>
    <property type="match status" value="1"/>
</dbReference>
<dbReference type="Gene3D" id="2.30.39.10">
    <property type="entry name" value="Alpha-1-antitrypsin, domain 1"/>
    <property type="match status" value="1"/>
</dbReference>
<dbReference type="Gene3D" id="3.30.497.10">
    <property type="entry name" value="Antithrombin, subunit I, domain 2"/>
    <property type="match status" value="1"/>
</dbReference>
<dbReference type="InterPro" id="IPR023795">
    <property type="entry name" value="Serpin_CS"/>
</dbReference>
<dbReference type="InterPro" id="IPR023796">
    <property type="entry name" value="Serpin_dom"/>
</dbReference>
<dbReference type="InterPro" id="IPR000215">
    <property type="entry name" value="Serpin_fam"/>
</dbReference>
<dbReference type="InterPro" id="IPR036186">
    <property type="entry name" value="Serpin_sf"/>
</dbReference>
<dbReference type="InterPro" id="IPR042178">
    <property type="entry name" value="Serpin_sf_1"/>
</dbReference>
<dbReference type="InterPro" id="IPR042185">
    <property type="entry name" value="Serpin_sf_2"/>
</dbReference>
<dbReference type="PANTHER" id="PTHR11461:SF49">
    <property type="entry name" value="PLASMINOGEN ACTIVATOR INHIBITOR 1"/>
    <property type="match status" value="1"/>
</dbReference>
<dbReference type="PANTHER" id="PTHR11461">
    <property type="entry name" value="SERINE PROTEASE INHIBITOR, SERPIN"/>
    <property type="match status" value="1"/>
</dbReference>
<dbReference type="Pfam" id="PF00079">
    <property type="entry name" value="Serpin"/>
    <property type="match status" value="1"/>
</dbReference>
<dbReference type="SMART" id="SM00093">
    <property type="entry name" value="SERPIN"/>
    <property type="match status" value="1"/>
</dbReference>
<dbReference type="SUPFAM" id="SSF56574">
    <property type="entry name" value="Serpins"/>
    <property type="match status" value="1"/>
</dbReference>
<dbReference type="PROSITE" id="PS00284">
    <property type="entry name" value="SERPIN"/>
    <property type="match status" value="1"/>
</dbReference>